<dbReference type="EC" id="3.6.5.-" evidence="3"/>
<dbReference type="EMBL" id="AC005825">
    <property type="protein sequence ID" value="AAD24598.1"/>
    <property type="molecule type" value="Genomic_DNA"/>
</dbReference>
<dbReference type="EMBL" id="CP002685">
    <property type="protein sequence ID" value="AEC06521.1"/>
    <property type="molecule type" value="Genomic_DNA"/>
</dbReference>
<dbReference type="EMBL" id="CP002685">
    <property type="protein sequence ID" value="ANM62581.1"/>
    <property type="molecule type" value="Genomic_DNA"/>
</dbReference>
<dbReference type="EMBL" id="CP002685">
    <property type="protein sequence ID" value="ANM62582.1"/>
    <property type="molecule type" value="Genomic_DNA"/>
</dbReference>
<dbReference type="EMBL" id="AY099660">
    <property type="protein sequence ID" value="AAM20511.1"/>
    <property type="status" value="ALT_SEQ"/>
    <property type="molecule type" value="mRNA"/>
</dbReference>
<dbReference type="EMBL" id="AK222043">
    <property type="protein sequence ID" value="BAD94786.1"/>
    <property type="molecule type" value="mRNA"/>
</dbReference>
<dbReference type="PIR" id="D84542">
    <property type="entry name" value="D84542"/>
</dbReference>
<dbReference type="RefSeq" id="NP_001324729.1">
    <property type="nucleotide sequence ID" value="NM_001335482.1"/>
</dbReference>
<dbReference type="RefSeq" id="NP_001324730.1">
    <property type="nucleotide sequence ID" value="NM_001335483.1"/>
</dbReference>
<dbReference type="RefSeq" id="NP_179255.1">
    <property type="nucleotide sequence ID" value="NM_127216.5"/>
</dbReference>
<dbReference type="SMR" id="Q9SLF3"/>
<dbReference type="BioGRID" id="1522">
    <property type="interactions" value="64"/>
</dbReference>
<dbReference type="FunCoup" id="Q9SLF3">
    <property type="interactions" value="1975"/>
</dbReference>
<dbReference type="IntAct" id="Q9SLF3">
    <property type="interactions" value="5"/>
</dbReference>
<dbReference type="MINT" id="Q9SLF3"/>
<dbReference type="STRING" id="3702.Q9SLF3"/>
<dbReference type="GlyGen" id="Q9SLF3">
    <property type="glycosylation" value="1 site"/>
</dbReference>
<dbReference type="iPTMnet" id="Q9SLF3"/>
<dbReference type="PaxDb" id="3702-AT2G16640.1"/>
<dbReference type="ProteomicsDB" id="234164"/>
<dbReference type="EnsemblPlants" id="AT2G16640.1">
    <property type="protein sequence ID" value="AT2G16640.1"/>
    <property type="gene ID" value="AT2G16640"/>
</dbReference>
<dbReference type="EnsemblPlants" id="AT2G16640.2">
    <property type="protein sequence ID" value="AT2G16640.2"/>
    <property type="gene ID" value="AT2G16640"/>
</dbReference>
<dbReference type="EnsemblPlants" id="AT2G16640.3">
    <property type="protein sequence ID" value="AT2G16640.3"/>
    <property type="gene ID" value="AT2G16640"/>
</dbReference>
<dbReference type="GeneID" id="816165"/>
<dbReference type="Gramene" id="AT2G16640.1">
    <property type="protein sequence ID" value="AT2G16640.1"/>
    <property type="gene ID" value="AT2G16640"/>
</dbReference>
<dbReference type="Gramene" id="AT2G16640.2">
    <property type="protein sequence ID" value="AT2G16640.2"/>
    <property type="gene ID" value="AT2G16640"/>
</dbReference>
<dbReference type="Gramene" id="AT2G16640.3">
    <property type="protein sequence ID" value="AT2G16640.3"/>
    <property type="gene ID" value="AT2G16640"/>
</dbReference>
<dbReference type="KEGG" id="ath:AT2G16640"/>
<dbReference type="Araport" id="AT2G16640"/>
<dbReference type="TAIR" id="AT2G16640">
    <property type="gene designation" value="TOC132"/>
</dbReference>
<dbReference type="eggNOG" id="ENOG502QR60">
    <property type="taxonomic scope" value="Eukaryota"/>
</dbReference>
<dbReference type="HOGENOM" id="CLU_003856_0_0_1"/>
<dbReference type="InParanoid" id="Q9SLF3"/>
<dbReference type="OMA" id="QDNIPGR"/>
<dbReference type="OrthoDB" id="8954335at2759"/>
<dbReference type="PhylomeDB" id="Q9SLF3"/>
<dbReference type="CD-CODE" id="4299E36E">
    <property type="entry name" value="Nucleolus"/>
</dbReference>
<dbReference type="PRO" id="PR:Q9SLF3"/>
<dbReference type="Proteomes" id="UP000006548">
    <property type="component" value="Chromosome 2"/>
</dbReference>
<dbReference type="ExpressionAtlas" id="Q9SLF3">
    <property type="expression patterns" value="baseline and differential"/>
</dbReference>
<dbReference type="GO" id="GO:0009707">
    <property type="term" value="C:chloroplast outer membrane"/>
    <property type="evidence" value="ECO:0000314"/>
    <property type="project" value="TAIR"/>
</dbReference>
<dbReference type="GO" id="GO:0009536">
    <property type="term" value="C:plastid"/>
    <property type="evidence" value="ECO:0007005"/>
    <property type="project" value="TAIR"/>
</dbReference>
<dbReference type="GO" id="GO:0051117">
    <property type="term" value="F:ATPase binding"/>
    <property type="evidence" value="ECO:0000353"/>
    <property type="project" value="CAFA"/>
</dbReference>
<dbReference type="GO" id="GO:0005525">
    <property type="term" value="F:GTP binding"/>
    <property type="evidence" value="ECO:0007669"/>
    <property type="project" value="UniProtKB-KW"/>
</dbReference>
<dbReference type="GO" id="GO:0003924">
    <property type="term" value="F:GTPase activity"/>
    <property type="evidence" value="ECO:0007669"/>
    <property type="project" value="InterPro"/>
</dbReference>
<dbReference type="GO" id="GO:0046872">
    <property type="term" value="F:metal ion binding"/>
    <property type="evidence" value="ECO:0007669"/>
    <property type="project" value="UniProtKB-KW"/>
</dbReference>
<dbReference type="GO" id="GO:0051087">
    <property type="term" value="F:protein-folding chaperone binding"/>
    <property type="evidence" value="ECO:0000353"/>
    <property type="project" value="CAFA"/>
</dbReference>
<dbReference type="GO" id="GO:0004888">
    <property type="term" value="F:transmembrane signaling receptor activity"/>
    <property type="evidence" value="ECO:0000250"/>
    <property type="project" value="TAIR"/>
</dbReference>
<dbReference type="GO" id="GO:0045036">
    <property type="term" value="P:protein targeting to chloroplast"/>
    <property type="evidence" value="ECO:0007669"/>
    <property type="project" value="InterPro"/>
</dbReference>
<dbReference type="GO" id="GO:0015031">
    <property type="term" value="P:protein transport"/>
    <property type="evidence" value="ECO:0007669"/>
    <property type="project" value="UniProtKB-KW"/>
</dbReference>
<dbReference type="CDD" id="cd01853">
    <property type="entry name" value="Toc34_like"/>
    <property type="match status" value="1"/>
</dbReference>
<dbReference type="DisProt" id="DP00610"/>
<dbReference type="FunFam" id="3.40.50.300:FF:000413">
    <property type="entry name" value="Translocase of chloroplast 120, chloroplastic"/>
    <property type="match status" value="1"/>
</dbReference>
<dbReference type="Gene3D" id="3.40.50.300">
    <property type="entry name" value="P-loop containing nucleotide triphosphate hydrolases"/>
    <property type="match status" value="1"/>
</dbReference>
<dbReference type="InterPro" id="IPR006703">
    <property type="entry name" value="G_AIG1"/>
</dbReference>
<dbReference type="InterPro" id="IPR045058">
    <property type="entry name" value="GIMA/IAN/Toc"/>
</dbReference>
<dbReference type="InterPro" id="IPR027417">
    <property type="entry name" value="P-loop_NTPase"/>
</dbReference>
<dbReference type="InterPro" id="IPR024283">
    <property type="entry name" value="TOC159_MAD"/>
</dbReference>
<dbReference type="InterPro" id="IPR005690">
    <property type="entry name" value="Toc86_159"/>
</dbReference>
<dbReference type="NCBIfam" id="TIGR00993">
    <property type="entry name" value="3a0901s04IAP86"/>
    <property type="match status" value="1"/>
</dbReference>
<dbReference type="PANTHER" id="PTHR10903">
    <property type="entry name" value="GTPASE, IMAP FAMILY MEMBER-RELATED"/>
    <property type="match status" value="1"/>
</dbReference>
<dbReference type="PANTHER" id="PTHR10903:SF135">
    <property type="entry name" value="TRANSLOCASE OF CHLOROPLAST 120, CHLOROPLASTIC-RELATED"/>
    <property type="match status" value="1"/>
</dbReference>
<dbReference type="Pfam" id="PF04548">
    <property type="entry name" value="AIG1"/>
    <property type="match status" value="1"/>
</dbReference>
<dbReference type="Pfam" id="PF11886">
    <property type="entry name" value="TOC159_MAD"/>
    <property type="match status" value="1"/>
</dbReference>
<dbReference type="SUPFAM" id="SSF52540">
    <property type="entry name" value="P-loop containing nucleoside triphosphate hydrolases"/>
    <property type="match status" value="1"/>
</dbReference>
<dbReference type="PROSITE" id="PS51720">
    <property type="entry name" value="G_AIG1"/>
    <property type="match status" value="1"/>
</dbReference>
<name>TC132_ARATH</name>
<feature type="initiator methionine" description="Removed" evidence="16">
    <location>
        <position position="1"/>
    </location>
</feature>
<feature type="chain" id="PRO_0000352658" description="Translocase of chloroplast 132, chloroplastic">
    <location>
        <begin position="2"/>
        <end position="1206"/>
    </location>
</feature>
<feature type="transmembrane region" description="Helical" evidence="4">
    <location>
        <begin position="1182"/>
        <end position="1199"/>
    </location>
</feature>
<feature type="domain" description="AIG1-type G" evidence="5">
    <location>
        <begin position="572"/>
        <end position="801"/>
    </location>
</feature>
<feature type="region of interest" description="Disordered" evidence="6">
    <location>
        <begin position="33"/>
        <end position="75"/>
    </location>
</feature>
<feature type="region of interest" description="Disordered" evidence="6">
    <location>
        <begin position="97"/>
        <end position="119"/>
    </location>
</feature>
<feature type="region of interest" description="Disordered" evidence="6">
    <location>
        <begin position="233"/>
        <end position="499"/>
    </location>
</feature>
<feature type="region of interest" description="G1" evidence="5">
    <location>
        <begin position="581"/>
        <end position="588"/>
    </location>
</feature>
<feature type="region of interest" description="Homodimerization" evidence="1">
    <location>
        <begin position="603"/>
        <end position="606"/>
    </location>
</feature>
<feature type="region of interest" description="G2" evidence="5">
    <location>
        <begin position="607"/>
        <end position="611"/>
    </location>
</feature>
<feature type="region of interest" description="G3" evidence="5">
    <location>
        <begin position="628"/>
        <end position="631"/>
    </location>
</feature>
<feature type="region of interest" description="Homodimerization" evidence="1">
    <location>
        <begin position="666"/>
        <end position="671"/>
    </location>
</feature>
<feature type="region of interest" description="G4" evidence="5">
    <location>
        <begin position="700"/>
        <end position="703"/>
    </location>
</feature>
<feature type="region of interest" description="G5" evidence="5">
    <location>
        <begin position="749"/>
        <end position="751"/>
    </location>
</feature>
<feature type="region of interest" description="Disordered" evidence="6">
    <location>
        <begin position="824"/>
        <end position="862"/>
    </location>
</feature>
<feature type="coiled-coil region" evidence="4">
    <location>
        <begin position="13"/>
        <end position="33"/>
    </location>
</feature>
<feature type="compositionally biased region" description="Acidic residues" evidence="6">
    <location>
        <begin position="39"/>
        <end position="49"/>
    </location>
</feature>
<feature type="compositionally biased region" description="Polar residues" evidence="6">
    <location>
        <begin position="309"/>
        <end position="324"/>
    </location>
</feature>
<feature type="compositionally biased region" description="Low complexity" evidence="6">
    <location>
        <begin position="325"/>
        <end position="336"/>
    </location>
</feature>
<feature type="compositionally biased region" description="Polar residues" evidence="6">
    <location>
        <begin position="357"/>
        <end position="379"/>
    </location>
</feature>
<feature type="compositionally biased region" description="Basic and acidic residues" evidence="6">
    <location>
        <begin position="403"/>
        <end position="427"/>
    </location>
</feature>
<feature type="compositionally biased region" description="Low complexity" evidence="6">
    <location>
        <begin position="430"/>
        <end position="440"/>
    </location>
</feature>
<feature type="compositionally biased region" description="Polar residues" evidence="6">
    <location>
        <begin position="468"/>
        <end position="492"/>
    </location>
</feature>
<feature type="compositionally biased region" description="Acidic residues" evidence="6">
    <location>
        <begin position="832"/>
        <end position="853"/>
    </location>
</feature>
<feature type="binding site" evidence="2">
    <location>
        <begin position="584"/>
        <end position="589"/>
    </location>
    <ligand>
        <name>GTP</name>
        <dbReference type="ChEBI" id="CHEBI:37565"/>
    </ligand>
</feature>
<feature type="binding site" evidence="2">
    <location>
        <position position="588"/>
    </location>
    <ligand>
        <name>Mg(2+)</name>
        <dbReference type="ChEBI" id="CHEBI:18420"/>
    </ligand>
</feature>
<feature type="binding site" evidence="2">
    <location>
        <begin position="603"/>
        <end position="608"/>
    </location>
    <ligand>
        <name>GTP</name>
        <dbReference type="ChEBI" id="CHEBI:37565"/>
    </ligand>
</feature>
<feature type="binding site" evidence="2">
    <location>
        <position position="701"/>
    </location>
    <ligand>
        <name>GTP</name>
        <dbReference type="ChEBI" id="CHEBI:37565"/>
    </ligand>
</feature>
<feature type="binding site" evidence="2">
    <location>
        <begin position="749"/>
        <end position="750"/>
    </location>
    <ligand>
        <name>GTP</name>
        <dbReference type="ChEBI" id="CHEBI:37565"/>
    </ligand>
</feature>
<feature type="modified residue" description="N-acetylglycine" evidence="16">
    <location>
        <position position="2"/>
    </location>
</feature>
<feature type="modified residue" description="Phosphoserine" evidence="15">
    <location>
        <position position="195"/>
    </location>
</feature>
<feature type="modified residue" description="Phosphoserine" evidence="3">
    <location>
        <position position="337"/>
    </location>
</feature>
<feature type="modified residue" description="Phosphoserine" evidence="3">
    <location>
        <position position="363"/>
    </location>
</feature>
<feature type="modified residue" description="Phosphoserine" evidence="3">
    <location>
        <position position="398"/>
    </location>
</feature>
<feature type="sequence conflict" description="In Ref. 3; AAM20511." evidence="12" ref="3">
    <original>R</original>
    <variation>G</variation>
    <location>
        <position position="10"/>
    </location>
</feature>
<organism>
    <name type="scientific">Arabidopsis thaliana</name>
    <name type="common">Mouse-ear cress</name>
    <dbReference type="NCBI Taxonomy" id="3702"/>
    <lineage>
        <taxon>Eukaryota</taxon>
        <taxon>Viridiplantae</taxon>
        <taxon>Streptophyta</taxon>
        <taxon>Embryophyta</taxon>
        <taxon>Tracheophyta</taxon>
        <taxon>Spermatophyta</taxon>
        <taxon>Magnoliopsida</taxon>
        <taxon>eudicotyledons</taxon>
        <taxon>Gunneridae</taxon>
        <taxon>Pentapetalae</taxon>
        <taxon>rosids</taxon>
        <taxon>malvids</taxon>
        <taxon>Brassicales</taxon>
        <taxon>Brassicaceae</taxon>
        <taxon>Camelineae</taxon>
        <taxon>Arabidopsis</taxon>
    </lineage>
</organism>
<accession>Q9SLF3</accession>
<accession>Q56WJ7</accession>
<accession>Q8LPK1</accession>
<reference key="1">
    <citation type="journal article" date="1999" name="Nature">
        <title>Sequence and analysis of chromosome 2 of the plant Arabidopsis thaliana.</title>
        <authorList>
            <person name="Lin X."/>
            <person name="Kaul S."/>
            <person name="Rounsley S.D."/>
            <person name="Shea T.P."/>
            <person name="Benito M.-I."/>
            <person name="Town C.D."/>
            <person name="Fujii C.Y."/>
            <person name="Mason T.M."/>
            <person name="Bowman C.L."/>
            <person name="Barnstead M.E."/>
            <person name="Feldblyum T.V."/>
            <person name="Buell C.R."/>
            <person name="Ketchum K.A."/>
            <person name="Lee J.J."/>
            <person name="Ronning C.M."/>
            <person name="Koo H.L."/>
            <person name="Moffat K.S."/>
            <person name="Cronin L.A."/>
            <person name="Shen M."/>
            <person name="Pai G."/>
            <person name="Van Aken S."/>
            <person name="Umayam L."/>
            <person name="Tallon L.J."/>
            <person name="Gill J.E."/>
            <person name="Adams M.D."/>
            <person name="Carrera A.J."/>
            <person name="Creasy T.H."/>
            <person name="Goodman H.M."/>
            <person name="Somerville C.R."/>
            <person name="Copenhaver G.P."/>
            <person name="Preuss D."/>
            <person name="Nierman W.C."/>
            <person name="White O."/>
            <person name="Eisen J.A."/>
            <person name="Salzberg S.L."/>
            <person name="Fraser C.M."/>
            <person name="Venter J.C."/>
        </authorList>
    </citation>
    <scope>NUCLEOTIDE SEQUENCE [LARGE SCALE GENOMIC DNA]</scope>
    <source>
        <strain>cv. Columbia</strain>
    </source>
</reference>
<reference key="2">
    <citation type="journal article" date="2017" name="Plant J.">
        <title>Araport11: a complete reannotation of the Arabidopsis thaliana reference genome.</title>
        <authorList>
            <person name="Cheng C.Y."/>
            <person name="Krishnakumar V."/>
            <person name="Chan A.P."/>
            <person name="Thibaud-Nissen F."/>
            <person name="Schobel S."/>
            <person name="Town C.D."/>
        </authorList>
    </citation>
    <scope>GENOME REANNOTATION</scope>
    <source>
        <strain>cv. Columbia</strain>
    </source>
</reference>
<reference key="3">
    <citation type="journal article" date="2003" name="Science">
        <title>Empirical analysis of transcriptional activity in the Arabidopsis genome.</title>
        <authorList>
            <person name="Yamada K."/>
            <person name="Lim J."/>
            <person name="Dale J.M."/>
            <person name="Chen H."/>
            <person name="Shinn P."/>
            <person name="Palm C.J."/>
            <person name="Southwick A.M."/>
            <person name="Wu H.C."/>
            <person name="Kim C.J."/>
            <person name="Nguyen M."/>
            <person name="Pham P.K."/>
            <person name="Cheuk R.F."/>
            <person name="Karlin-Newmann G."/>
            <person name="Liu S.X."/>
            <person name="Lam B."/>
            <person name="Sakano H."/>
            <person name="Wu T."/>
            <person name="Yu G."/>
            <person name="Miranda M."/>
            <person name="Quach H.L."/>
            <person name="Tripp M."/>
            <person name="Chang C.H."/>
            <person name="Lee J.M."/>
            <person name="Toriumi M.J."/>
            <person name="Chan M.M."/>
            <person name="Tang C.C."/>
            <person name="Onodera C.S."/>
            <person name="Deng J.M."/>
            <person name="Akiyama K."/>
            <person name="Ansari Y."/>
            <person name="Arakawa T."/>
            <person name="Banh J."/>
            <person name="Banno F."/>
            <person name="Bowser L."/>
            <person name="Brooks S.Y."/>
            <person name="Carninci P."/>
            <person name="Chao Q."/>
            <person name="Choy N."/>
            <person name="Enju A."/>
            <person name="Goldsmith A.D."/>
            <person name="Gurjal M."/>
            <person name="Hansen N.F."/>
            <person name="Hayashizaki Y."/>
            <person name="Johnson-Hopson C."/>
            <person name="Hsuan V.W."/>
            <person name="Iida K."/>
            <person name="Karnes M."/>
            <person name="Khan S."/>
            <person name="Koesema E."/>
            <person name="Ishida J."/>
            <person name="Jiang P.X."/>
            <person name="Jones T."/>
            <person name="Kawai J."/>
            <person name="Kamiya A."/>
            <person name="Meyers C."/>
            <person name="Nakajima M."/>
            <person name="Narusaka M."/>
            <person name="Seki M."/>
            <person name="Sakurai T."/>
            <person name="Satou M."/>
            <person name="Tamse R."/>
            <person name="Vaysberg M."/>
            <person name="Wallender E.K."/>
            <person name="Wong C."/>
            <person name="Yamamura Y."/>
            <person name="Yuan S."/>
            <person name="Shinozaki K."/>
            <person name="Davis R.W."/>
            <person name="Theologis A."/>
            <person name="Ecker J.R."/>
        </authorList>
    </citation>
    <scope>NUCLEOTIDE SEQUENCE [LARGE SCALE MRNA]</scope>
    <source>
        <strain>cv. Columbia</strain>
    </source>
</reference>
<reference key="4">
    <citation type="submission" date="2005-03" db="EMBL/GenBank/DDBJ databases">
        <title>Large-scale analysis of RIKEN Arabidopsis full-length (RAFL) cDNAs.</title>
        <authorList>
            <person name="Totoki Y."/>
            <person name="Seki M."/>
            <person name="Ishida J."/>
            <person name="Nakajima M."/>
            <person name="Enju A."/>
            <person name="Kamiya A."/>
            <person name="Narusaka M."/>
            <person name="Shin-i T."/>
            <person name="Nakagawa M."/>
            <person name="Sakamoto N."/>
            <person name="Oishi K."/>
            <person name="Kohara Y."/>
            <person name="Kobayashi M."/>
            <person name="Toyoda A."/>
            <person name="Sakaki Y."/>
            <person name="Sakurai T."/>
            <person name="Iida K."/>
            <person name="Akiyama K."/>
            <person name="Satou M."/>
            <person name="Toyoda T."/>
            <person name="Konagaya A."/>
            <person name="Carninci P."/>
            <person name="Kawai J."/>
            <person name="Hayashizaki Y."/>
            <person name="Shinozaki K."/>
        </authorList>
    </citation>
    <scope>NUCLEOTIDE SEQUENCE [LARGE SCALE MRNA] OF 728-1206</scope>
    <source>
        <strain>cv. Columbia</strain>
    </source>
</reference>
<reference key="5">
    <citation type="journal article" date="2000" name="Nature">
        <title>The major protein import receptor of plastids is essential for chloroplast biogenesis.</title>
        <authorList>
            <person name="Bauer J."/>
            <person name="Chen K."/>
            <person name="Hiltbunner A."/>
            <person name="Wehrli E."/>
            <person name="Eugster M."/>
            <person name="Schnell D."/>
            <person name="Kessler F."/>
        </authorList>
    </citation>
    <scope>INTERACTION WITH THE TOC COMPLEX</scope>
    <scope>INDUCTION BY LIGHT</scope>
</reference>
<reference key="6">
    <citation type="journal article" date="2004" name="Plant Cell">
        <title>Functional specialization amongst the Arabidopsis Toc159 family of chloroplast protein import receptors.</title>
        <authorList>
            <person name="Kubis S."/>
            <person name="Patel R."/>
            <person name="Combe J."/>
            <person name="Bedard J."/>
            <person name="Kovacheva S."/>
            <person name="Lilley K."/>
            <person name="Biehl A."/>
            <person name="Leister D."/>
            <person name="Rios G."/>
            <person name="Koncz C."/>
            <person name="Jarvis P."/>
        </authorList>
    </citation>
    <scope>FUNCTION</scope>
    <scope>TISSUE SPECIFICITY</scope>
</reference>
<reference key="7">
    <citation type="journal article" date="2006" name="Plant Biol.">
        <title>Deletion of core components of the plastid protein import machinery causes differential arrest of embryo development in Arabidopsis thaliana.</title>
        <authorList>
            <person name="Hust B."/>
            <person name="Gutensohn M."/>
        </authorList>
    </citation>
    <scope>FUNCTION</scope>
</reference>
<reference key="8">
    <citation type="journal article" date="2009" name="J. Proteomics">
        <title>Phosphoproteomic analysis of nuclei-enriched fractions from Arabidopsis thaliana.</title>
        <authorList>
            <person name="Jones A.M.E."/>
            <person name="MacLean D."/>
            <person name="Studholme D.J."/>
            <person name="Serna-Sanz A."/>
            <person name="Andreasson E."/>
            <person name="Rathjen J.P."/>
            <person name="Peck S.C."/>
        </authorList>
    </citation>
    <scope>PHOSPHORYLATION [LARGE SCALE ANALYSIS] AT SER-195</scope>
    <scope>IDENTIFICATION BY MASS SPECTROMETRY [LARGE SCALE ANALYSIS]</scope>
    <source>
        <strain>cv. Columbia</strain>
    </source>
</reference>
<reference key="9">
    <citation type="journal article" date="2012" name="Mol. Cell. Proteomics">
        <title>Comparative large-scale characterisation of plant vs. mammal proteins reveals similar and idiosyncratic N-alpha acetylation features.</title>
        <authorList>
            <person name="Bienvenut W.V."/>
            <person name="Sumpton D."/>
            <person name="Martinez A."/>
            <person name="Lilla S."/>
            <person name="Espagne C."/>
            <person name="Meinnel T."/>
            <person name="Giglione C."/>
        </authorList>
    </citation>
    <scope>ACETYLATION [LARGE SCALE ANALYSIS] AT GLY-2</scope>
    <scope>CLEAVAGE OF INITIATOR METHIONINE [LARGE SCALE ANALYSIS]</scope>
    <scope>IDENTIFICATION BY MASS SPECTROMETRY [LARGE SCALE ANALYSIS]</scope>
</reference>
<reference key="10">
    <citation type="journal article" date="2017" name="J. Biol. Chem.">
        <title>The novel chloroplast outer membrane kinase KOC1 is a required component of the plastid protein import machinery.</title>
        <authorList>
            <person name="Zufferey M."/>
            <person name="Montandon C."/>
            <person name="Douet V."/>
            <person name="Demarsy E."/>
            <person name="Agne B."/>
            <person name="Baginsky S."/>
            <person name="Kessler F."/>
        </authorList>
    </citation>
    <scope>PHOSPHORYLATION BY KOC1</scope>
    <source>
        <strain>cv. Columbia</strain>
    </source>
</reference>
<protein>
    <recommendedName>
        <fullName evidence="11">Translocase of chloroplast 132, chloroplastic</fullName>
        <shortName evidence="11">AtToc132</shortName>
        <ecNumber evidence="3">3.6.5.-</ecNumber>
    </recommendedName>
    <alternativeName>
        <fullName evidence="11">132 kDa chloroplast outer envelope protein</fullName>
    </alternativeName>
</protein>
<sequence>MGDGTEFVVRSDREDKKLAEDRISDEQVVKNELVRSDEVRDDNEDEVFEEAIGSENDEQEEEEDPKRELFESDDLPLVETLKSSMVEHEVEDFEEAVGDLDETSSNEGGVKDFTAVGESHGAGEAEFDVLATKMNGDKGEGGGGGSYDKVESSLDVVDTTENATSTNTNGSNLAAEHVGIENGKTHSFLGNGIASPKNKEVVAEVIPKDDGIEEPWNDGIEVDNWEERVDGIQTEQEVEEGEGTTENQFEKRTEEEVVEGEGTSKNLFEKQTEQDVVEGEGTSKDLFENGSVCMDSESEAERNGETGAAYTSNIVTNASGDNEVSSAVTSSPLEESSSGEKGETEGDSTCLKPEQHLASSPHSYPESTEVHSNSGSPGVTSREHKPVQSANGGHDVQSPQPNKELEKQQSSRVHVDPEITENSHVETEPEVVSSVSPTESRSNPAALPPARPAGLGRASPLLEPASRAPQQSRVNGNGSHNQFQQAEDSTTTEADEHDETREKLQLIRVKFLRLAHRLGQTPHNVVVAQVLYRLGLAEQLRGRNGSRVGAFSFDRASAMAEQLEAAGQDPLDFSCTIMVLGKSGVGKSATINSIFDEVKFCTDAFQMGTKRVQDVEGLVQGIKVRVIDTPGLLPSWSDQAKNEKILNSVKAFIKKNPPDIVLYLDRLDMQSRDSGDMPLLRTISDVFGPSIWFNAIVGLTHAASVPPDGPNGTASSYDMFVTQRSHVIQQAIRQAAGDMRLMNPVSLVENHSACRTNRAGQRVLPNGQVWKPHLLLLSFASKILAEANALLKLQDNIPGRPFAARSKAPPLPFLLSSLLQSRPQPKLPEQQYGDEEDEDDLEESSDSDEESEYDQLPPFKSLTKAQMATLSKSQKKQYLDEMEYREKLLMKKQMKEERKRRKMFKKFAAEIKDLPDGYSENVEEESGGPASVPVPMPDLSLPASFDSDNPTHRYRYLDSSNQWLVRPVLETHGWDHDIGYEGVNAERLFVVKEKIPISVSGQVTKDKKDANVQLEMASSVKHGEGKSTSLGFDMQTVGKELAYTLRSETRFNNFRRNKAAAGLSVTHLGDSVSAGLKVEDKFIASKWFRIVMSGGAMTSRGDFAYGGTLEAQLRDKDYPLGRFLTTLGLSVMDWHGDLAIGGNIQSQVPIGRSSNLIARANLNNRGAGQVSVRVNSSEQLQLAMVAIVPLFKKLLSYYYPQTQYGQ</sequence>
<gene>
    <name evidence="11" type="primary">TOC132</name>
    <name evidence="13" type="ordered locus">At2g16640</name>
    <name evidence="14" type="ORF">T24I21.5</name>
</gene>
<proteinExistence type="evidence at protein level"/>
<keyword id="KW-0007">Acetylation</keyword>
<keyword id="KW-0150">Chloroplast</keyword>
<keyword id="KW-0175">Coiled coil</keyword>
<keyword id="KW-0963">Cytoplasm</keyword>
<keyword id="KW-0342">GTP-binding</keyword>
<keyword id="KW-0378">Hydrolase</keyword>
<keyword id="KW-0460">Magnesium</keyword>
<keyword id="KW-0472">Membrane</keyword>
<keyword id="KW-0479">Metal-binding</keyword>
<keyword id="KW-0547">Nucleotide-binding</keyword>
<keyword id="KW-0597">Phosphoprotein</keyword>
<keyword id="KW-0934">Plastid</keyword>
<keyword id="KW-1002">Plastid outer membrane</keyword>
<keyword id="KW-0653">Protein transport</keyword>
<keyword id="KW-0675">Receptor</keyword>
<keyword id="KW-1185">Reference proteome</keyword>
<keyword id="KW-0812">Transmembrane</keyword>
<keyword id="KW-1133">Transmembrane helix</keyword>
<keyword id="KW-0813">Transport</keyword>
<evidence type="ECO:0000250" key="1"/>
<evidence type="ECO:0000250" key="2">
    <source>
        <dbReference type="UniProtKB" id="O23680"/>
    </source>
</evidence>
<evidence type="ECO:0000250" key="3">
    <source>
        <dbReference type="UniProtKB" id="O81283"/>
    </source>
</evidence>
<evidence type="ECO:0000255" key="4"/>
<evidence type="ECO:0000255" key="5">
    <source>
        <dbReference type="PROSITE-ProRule" id="PRU01057"/>
    </source>
</evidence>
<evidence type="ECO:0000256" key="6">
    <source>
        <dbReference type="SAM" id="MobiDB-lite"/>
    </source>
</evidence>
<evidence type="ECO:0000269" key="7">
    <source>
    </source>
</evidence>
<evidence type="ECO:0000269" key="8">
    <source>
    </source>
</evidence>
<evidence type="ECO:0000269" key="9">
    <source>
    </source>
</evidence>
<evidence type="ECO:0000269" key="10">
    <source>
    </source>
</evidence>
<evidence type="ECO:0000303" key="11">
    <source>
    </source>
</evidence>
<evidence type="ECO:0000305" key="12"/>
<evidence type="ECO:0000312" key="13">
    <source>
        <dbReference type="Araport" id="AT2G16640"/>
    </source>
</evidence>
<evidence type="ECO:0000312" key="14">
    <source>
        <dbReference type="EMBL" id="AAD24598.1"/>
    </source>
</evidence>
<evidence type="ECO:0007744" key="15">
    <source>
    </source>
</evidence>
<evidence type="ECO:0007744" key="16">
    <source>
    </source>
</evidence>
<comment type="function">
    <text evidence="8 9">GTPase involved in protein precursor import into chloroplasts. Seems to recognize chloroplast-destined precursor proteins and regulate their presentation to the translocation channel through GTP hydrolysis. Probably specialized in the import of nuclear encoded non-photosynthetic preproteins from the cytoplasm to the chloroplast.</text>
</comment>
<comment type="cofactor">
    <cofactor evidence="2">
        <name>Mg(2+)</name>
        <dbReference type="ChEBI" id="CHEBI:18420"/>
    </cofactor>
    <text evidence="2">Binds 1 Mg(2+) ion by subunit.</text>
</comment>
<comment type="subunit">
    <text evidence="3 7">Homodimer (By similarity). Part of the TOC core complex that includes 1 protein for the specific recognition of transit peptides surrounded by a ring composed of four proteins forming translocation channels, and four to five GTP-binding proteins providing energy. This core complex can interact with components of the TIC complex to form a larger import complex. Chloroplastic protein precursor such as prSS (precursor of the RuBisCO small subunit) interacts with these complexes. The TOC complex contains a specific subset of polar lipids such as digalactosyldiacylglyceride (DGDG), phosphatidylcholine (PC) and phosphatidylglycerol (PG).</text>
</comment>
<comment type="subcellular location">
    <subcellularLocation>
        <location evidence="2">Plastid</location>
        <location evidence="2">Chloroplast outer membrane</location>
        <topology evidence="2">Single-pass membrane protein</topology>
    </subcellularLocation>
    <subcellularLocation>
        <location evidence="1">Cytoplasm</location>
    </subcellularLocation>
    <text evidence="1">Cycles between the cytoplasm and chloroplast, probably as a soluble preprotein receptor. The anchoring to the chloroplast outer membrane required the GTPase activity and GDP. May contain beta barrel transmembrane regions (By similarity).</text>
</comment>
<comment type="tissue specificity">
    <text evidence="8">Expressed in seedlings, leaves, flowers, and roots.</text>
</comment>
<comment type="induction">
    <text evidence="7">By light conditions.</text>
</comment>
<comment type="PTM">
    <text evidence="10">Phosphorylated by KOC1.</text>
</comment>
<comment type="similarity">
    <text evidence="12">Belongs to the TRAFAC class TrmE-Era-EngA-EngB-Septin-like GTPase superfamily. AIG1/Toc34/Toc159-like paraseptin GTPase family. TOC159 subfamily.</text>
</comment>
<comment type="sequence caution" evidence="12">
    <conflict type="erroneous termination">
        <sequence resource="EMBL-CDS" id="AAM20511"/>
    </conflict>
    <text>Truncated C-terminus.</text>
</comment>